<feature type="chain" id="PRO_0000337387" description="Elongation factor Tu 2">
    <location>
        <begin position="1"/>
        <end position="394"/>
    </location>
</feature>
<feature type="domain" description="tr-type G">
    <location>
        <begin position="10"/>
        <end position="204"/>
    </location>
</feature>
<feature type="region of interest" description="G1" evidence="1">
    <location>
        <begin position="19"/>
        <end position="26"/>
    </location>
</feature>
<feature type="region of interest" description="G2" evidence="1">
    <location>
        <begin position="60"/>
        <end position="64"/>
    </location>
</feature>
<feature type="region of interest" description="G3" evidence="1">
    <location>
        <begin position="81"/>
        <end position="84"/>
    </location>
</feature>
<feature type="region of interest" description="G4" evidence="1">
    <location>
        <begin position="136"/>
        <end position="139"/>
    </location>
</feature>
<feature type="region of interest" description="G5" evidence="1">
    <location>
        <begin position="174"/>
        <end position="176"/>
    </location>
</feature>
<feature type="binding site" evidence="2">
    <location>
        <begin position="19"/>
        <end position="26"/>
    </location>
    <ligand>
        <name>GTP</name>
        <dbReference type="ChEBI" id="CHEBI:37565"/>
    </ligand>
</feature>
<feature type="binding site" evidence="2">
    <location>
        <position position="26"/>
    </location>
    <ligand>
        <name>Mg(2+)</name>
        <dbReference type="ChEBI" id="CHEBI:18420"/>
    </ligand>
</feature>
<feature type="binding site" evidence="2">
    <location>
        <begin position="81"/>
        <end position="85"/>
    </location>
    <ligand>
        <name>GTP</name>
        <dbReference type="ChEBI" id="CHEBI:37565"/>
    </ligand>
</feature>
<feature type="binding site" evidence="2">
    <location>
        <begin position="136"/>
        <end position="139"/>
    </location>
    <ligand>
        <name>GTP</name>
        <dbReference type="ChEBI" id="CHEBI:37565"/>
    </ligand>
</feature>
<evidence type="ECO:0000250" key="1"/>
<evidence type="ECO:0000255" key="2">
    <source>
        <dbReference type="HAMAP-Rule" id="MF_00118"/>
    </source>
</evidence>
<dbReference type="EC" id="3.6.5.3" evidence="2"/>
<dbReference type="EMBL" id="CP000800">
    <property type="protein sequence ID" value="ABV20040.1"/>
    <property type="molecule type" value="Genomic_DNA"/>
</dbReference>
<dbReference type="RefSeq" id="WP_000031812.1">
    <property type="nucleotide sequence ID" value="NC_009801.1"/>
</dbReference>
<dbReference type="EMDB" id="EMD-8826"/>
<dbReference type="EMDB" id="EMD-8829"/>
<dbReference type="SMR" id="A7ZUJ2"/>
<dbReference type="KEGG" id="ecw:EcE24377A_4519"/>
<dbReference type="HOGENOM" id="CLU_007265_0_2_6"/>
<dbReference type="Proteomes" id="UP000001122">
    <property type="component" value="Chromosome"/>
</dbReference>
<dbReference type="GO" id="GO:0005829">
    <property type="term" value="C:cytosol"/>
    <property type="evidence" value="ECO:0007669"/>
    <property type="project" value="TreeGrafter"/>
</dbReference>
<dbReference type="GO" id="GO:0005525">
    <property type="term" value="F:GTP binding"/>
    <property type="evidence" value="ECO:0007669"/>
    <property type="project" value="UniProtKB-UniRule"/>
</dbReference>
<dbReference type="GO" id="GO:0003924">
    <property type="term" value="F:GTPase activity"/>
    <property type="evidence" value="ECO:0007669"/>
    <property type="project" value="InterPro"/>
</dbReference>
<dbReference type="GO" id="GO:0097216">
    <property type="term" value="F:guanosine tetraphosphate binding"/>
    <property type="evidence" value="ECO:0007669"/>
    <property type="project" value="UniProtKB-ARBA"/>
</dbReference>
<dbReference type="GO" id="GO:0003746">
    <property type="term" value="F:translation elongation factor activity"/>
    <property type="evidence" value="ECO:0007669"/>
    <property type="project" value="UniProtKB-UniRule"/>
</dbReference>
<dbReference type="CDD" id="cd01884">
    <property type="entry name" value="EF_Tu"/>
    <property type="match status" value="1"/>
</dbReference>
<dbReference type="CDD" id="cd03697">
    <property type="entry name" value="EFTU_II"/>
    <property type="match status" value="1"/>
</dbReference>
<dbReference type="CDD" id="cd03707">
    <property type="entry name" value="EFTU_III"/>
    <property type="match status" value="1"/>
</dbReference>
<dbReference type="FunFam" id="2.40.30.10:FF:000001">
    <property type="entry name" value="Elongation factor Tu"/>
    <property type="match status" value="1"/>
</dbReference>
<dbReference type="FunFam" id="3.40.50.300:FF:000003">
    <property type="entry name" value="Elongation factor Tu"/>
    <property type="match status" value="1"/>
</dbReference>
<dbReference type="Gene3D" id="3.40.50.300">
    <property type="entry name" value="P-loop containing nucleotide triphosphate hydrolases"/>
    <property type="match status" value="1"/>
</dbReference>
<dbReference type="Gene3D" id="2.40.30.10">
    <property type="entry name" value="Translation factors"/>
    <property type="match status" value="2"/>
</dbReference>
<dbReference type="HAMAP" id="MF_00118_B">
    <property type="entry name" value="EF_Tu_B"/>
    <property type="match status" value="1"/>
</dbReference>
<dbReference type="InterPro" id="IPR041709">
    <property type="entry name" value="EF-Tu_GTP-bd"/>
</dbReference>
<dbReference type="InterPro" id="IPR050055">
    <property type="entry name" value="EF-Tu_GTPase"/>
</dbReference>
<dbReference type="InterPro" id="IPR004161">
    <property type="entry name" value="EFTu-like_2"/>
</dbReference>
<dbReference type="InterPro" id="IPR033720">
    <property type="entry name" value="EFTU_2"/>
</dbReference>
<dbReference type="InterPro" id="IPR031157">
    <property type="entry name" value="G_TR_CS"/>
</dbReference>
<dbReference type="InterPro" id="IPR027417">
    <property type="entry name" value="P-loop_NTPase"/>
</dbReference>
<dbReference type="InterPro" id="IPR005225">
    <property type="entry name" value="Small_GTP-bd"/>
</dbReference>
<dbReference type="InterPro" id="IPR000795">
    <property type="entry name" value="T_Tr_GTP-bd_dom"/>
</dbReference>
<dbReference type="InterPro" id="IPR009000">
    <property type="entry name" value="Transl_B-barrel_sf"/>
</dbReference>
<dbReference type="InterPro" id="IPR009001">
    <property type="entry name" value="Transl_elong_EF1A/Init_IF2_C"/>
</dbReference>
<dbReference type="InterPro" id="IPR004541">
    <property type="entry name" value="Transl_elong_EFTu/EF1A_bac/org"/>
</dbReference>
<dbReference type="InterPro" id="IPR004160">
    <property type="entry name" value="Transl_elong_EFTu/EF1A_C"/>
</dbReference>
<dbReference type="NCBIfam" id="TIGR00485">
    <property type="entry name" value="EF-Tu"/>
    <property type="match status" value="1"/>
</dbReference>
<dbReference type="NCBIfam" id="NF000766">
    <property type="entry name" value="PRK00049.1"/>
    <property type="match status" value="1"/>
</dbReference>
<dbReference type="NCBIfam" id="NF009372">
    <property type="entry name" value="PRK12735.1"/>
    <property type="match status" value="1"/>
</dbReference>
<dbReference type="NCBIfam" id="NF009373">
    <property type="entry name" value="PRK12736.1"/>
    <property type="match status" value="1"/>
</dbReference>
<dbReference type="NCBIfam" id="TIGR00231">
    <property type="entry name" value="small_GTP"/>
    <property type="match status" value="1"/>
</dbReference>
<dbReference type="PANTHER" id="PTHR43721:SF22">
    <property type="entry name" value="ELONGATION FACTOR TU, MITOCHONDRIAL"/>
    <property type="match status" value="1"/>
</dbReference>
<dbReference type="PANTHER" id="PTHR43721">
    <property type="entry name" value="ELONGATION FACTOR TU-RELATED"/>
    <property type="match status" value="1"/>
</dbReference>
<dbReference type="Pfam" id="PF00009">
    <property type="entry name" value="GTP_EFTU"/>
    <property type="match status" value="1"/>
</dbReference>
<dbReference type="Pfam" id="PF03144">
    <property type="entry name" value="GTP_EFTU_D2"/>
    <property type="match status" value="1"/>
</dbReference>
<dbReference type="Pfam" id="PF03143">
    <property type="entry name" value="GTP_EFTU_D3"/>
    <property type="match status" value="1"/>
</dbReference>
<dbReference type="PRINTS" id="PR00315">
    <property type="entry name" value="ELONGATNFCT"/>
</dbReference>
<dbReference type="SUPFAM" id="SSF50465">
    <property type="entry name" value="EF-Tu/eEF-1alpha/eIF2-gamma C-terminal domain"/>
    <property type="match status" value="1"/>
</dbReference>
<dbReference type="SUPFAM" id="SSF52540">
    <property type="entry name" value="P-loop containing nucleoside triphosphate hydrolases"/>
    <property type="match status" value="1"/>
</dbReference>
<dbReference type="SUPFAM" id="SSF50447">
    <property type="entry name" value="Translation proteins"/>
    <property type="match status" value="1"/>
</dbReference>
<dbReference type="PROSITE" id="PS00301">
    <property type="entry name" value="G_TR_1"/>
    <property type="match status" value="1"/>
</dbReference>
<dbReference type="PROSITE" id="PS51722">
    <property type="entry name" value="G_TR_2"/>
    <property type="match status" value="1"/>
</dbReference>
<keyword id="KW-0963">Cytoplasm</keyword>
<keyword id="KW-0251">Elongation factor</keyword>
<keyword id="KW-0342">GTP-binding</keyword>
<keyword id="KW-0378">Hydrolase</keyword>
<keyword id="KW-0460">Magnesium</keyword>
<keyword id="KW-0479">Metal-binding</keyword>
<keyword id="KW-0547">Nucleotide-binding</keyword>
<keyword id="KW-0648">Protein biosynthesis</keyword>
<keyword id="KW-1185">Reference proteome</keyword>
<proteinExistence type="inferred from homology"/>
<name>EFTU2_ECO24</name>
<accession>A7ZUJ2</accession>
<organism>
    <name type="scientific">Escherichia coli O139:H28 (strain E24377A / ETEC)</name>
    <dbReference type="NCBI Taxonomy" id="331111"/>
    <lineage>
        <taxon>Bacteria</taxon>
        <taxon>Pseudomonadati</taxon>
        <taxon>Pseudomonadota</taxon>
        <taxon>Gammaproteobacteria</taxon>
        <taxon>Enterobacterales</taxon>
        <taxon>Enterobacteriaceae</taxon>
        <taxon>Escherichia</taxon>
    </lineage>
</organism>
<gene>
    <name evidence="2" type="primary">tuf2</name>
    <name type="ordered locus">EcE24377A_4519</name>
</gene>
<sequence>MSKEKFERTKPHVNVGTIGHVDHGKTTLTAAITTVLAKTYGGAARAFNQIDNAPEEKARGITINTSHVEYDTPTRHYAHVDCPGHADYVKNMITGAAQMDGAILVVAATDGPMPQTREHILLGRQVGVPYIIVFLNKCDMVDDEELLELVEMEVRELLSQYDFPGDDTPIVRGSALKALEGDAEWEAKILELAGFLDSYIPEPERAIDKPFLLPIEDVFSISGRGTVVTGRVERGIIKVGEEVEIVGIKETQKSTCTGVEMFRKLLDEGRAGENVGVLLRGIKREEIERGQVLAKPGTIKPHTKFESEVYILSKDEGGRHTPFFKGYRPQFYFRTTDVTGTIELPEGVEMVMPGDNIKMVVTLIHPIAMDDGLRFAIREGGRTVGAGVVAKVLS</sequence>
<protein>
    <recommendedName>
        <fullName evidence="2">Elongation factor Tu 2</fullName>
        <shortName evidence="2">EF-Tu 2</shortName>
        <ecNumber evidence="2">3.6.5.3</ecNumber>
    </recommendedName>
</protein>
<comment type="function">
    <text evidence="2">GTP hydrolase that promotes the GTP-dependent binding of aminoacyl-tRNA to the A-site of ribosomes during protein biosynthesis.</text>
</comment>
<comment type="catalytic activity">
    <reaction evidence="2">
        <text>GTP + H2O = GDP + phosphate + H(+)</text>
        <dbReference type="Rhea" id="RHEA:19669"/>
        <dbReference type="ChEBI" id="CHEBI:15377"/>
        <dbReference type="ChEBI" id="CHEBI:15378"/>
        <dbReference type="ChEBI" id="CHEBI:37565"/>
        <dbReference type="ChEBI" id="CHEBI:43474"/>
        <dbReference type="ChEBI" id="CHEBI:58189"/>
        <dbReference type="EC" id="3.6.5.3"/>
    </reaction>
    <physiologicalReaction direction="left-to-right" evidence="2">
        <dbReference type="Rhea" id="RHEA:19670"/>
    </physiologicalReaction>
</comment>
<comment type="subunit">
    <text evidence="2">Monomer.</text>
</comment>
<comment type="subcellular location">
    <subcellularLocation>
        <location evidence="2">Cytoplasm</location>
    </subcellularLocation>
</comment>
<comment type="similarity">
    <text evidence="2">Belongs to the TRAFAC class translation factor GTPase superfamily. Classic translation factor GTPase family. EF-Tu/EF-1A subfamily.</text>
</comment>
<reference key="1">
    <citation type="journal article" date="2008" name="J. Bacteriol.">
        <title>The pangenome structure of Escherichia coli: comparative genomic analysis of E. coli commensal and pathogenic isolates.</title>
        <authorList>
            <person name="Rasko D.A."/>
            <person name="Rosovitz M.J."/>
            <person name="Myers G.S.A."/>
            <person name="Mongodin E.F."/>
            <person name="Fricke W.F."/>
            <person name="Gajer P."/>
            <person name="Crabtree J."/>
            <person name="Sebaihia M."/>
            <person name="Thomson N.R."/>
            <person name="Chaudhuri R."/>
            <person name="Henderson I.R."/>
            <person name="Sperandio V."/>
            <person name="Ravel J."/>
        </authorList>
    </citation>
    <scope>NUCLEOTIDE SEQUENCE [LARGE SCALE GENOMIC DNA]</scope>
    <source>
        <strain>E24377A / ETEC</strain>
    </source>
</reference>